<gene>
    <name type="primary">AFP-D1</name>
</gene>
<keyword id="KW-0539">Nucleus</keyword>
<keyword id="KW-1185">Reference proteome</keyword>
<organism>
    <name type="scientific">Triticum aestivum</name>
    <name type="common">Wheat</name>
    <dbReference type="NCBI Taxonomy" id="4565"/>
    <lineage>
        <taxon>Eukaryota</taxon>
        <taxon>Viridiplantae</taxon>
        <taxon>Streptophyta</taxon>
        <taxon>Embryophyta</taxon>
        <taxon>Tracheophyta</taxon>
        <taxon>Spermatophyta</taxon>
        <taxon>Magnoliopsida</taxon>
        <taxon>Liliopsida</taxon>
        <taxon>Poales</taxon>
        <taxon>Poaceae</taxon>
        <taxon>BOP clade</taxon>
        <taxon>Pooideae</taxon>
        <taxon>Triticodae</taxon>
        <taxon>Triticeae</taxon>
        <taxon>Triticinae</taxon>
        <taxon>Triticum</taxon>
    </lineage>
</organism>
<name>NNJA3_WHEAT</name>
<protein>
    <recommendedName>
        <fullName>Ninja-family protein 3</fullName>
    </recommendedName>
    <alternativeName>
        <fullName>ABI five-binding protein D1</fullName>
        <shortName>ABI5-binding protein D1</shortName>
        <shortName>TaAFP-D1</shortName>
    </alternativeName>
</protein>
<dbReference type="EMBL" id="AB360913">
    <property type="protein sequence ID" value="BAG12829.1"/>
    <property type="molecule type" value="Genomic_DNA"/>
</dbReference>
<dbReference type="Proteomes" id="UP000019116">
    <property type="component" value="Unplaced"/>
</dbReference>
<dbReference type="ExpressionAtlas" id="B1B5D5">
    <property type="expression patterns" value="baseline and differential"/>
</dbReference>
<dbReference type="GO" id="GO:0005634">
    <property type="term" value="C:nucleus"/>
    <property type="evidence" value="ECO:0000318"/>
    <property type="project" value="GO_Central"/>
</dbReference>
<dbReference type="GO" id="GO:0045892">
    <property type="term" value="P:negative regulation of DNA-templated transcription"/>
    <property type="evidence" value="ECO:0000318"/>
    <property type="project" value="GO_Central"/>
</dbReference>
<dbReference type="GO" id="GO:0007165">
    <property type="term" value="P:signal transduction"/>
    <property type="evidence" value="ECO:0007669"/>
    <property type="project" value="InterPro"/>
</dbReference>
<dbReference type="InterPro" id="IPR031307">
    <property type="entry name" value="Ninja_fam"/>
</dbReference>
<dbReference type="InterPro" id="IPR012463">
    <property type="entry name" value="Ninja_motif"/>
</dbReference>
<dbReference type="InterPro" id="IPR032310">
    <property type="entry name" value="NLS_NINJA_AFP-like"/>
</dbReference>
<dbReference type="InterPro" id="IPR032308">
    <property type="entry name" value="TDBD"/>
</dbReference>
<dbReference type="PANTHER" id="PTHR31413">
    <property type="entry name" value="AFP HOMOLOG 2"/>
    <property type="match status" value="1"/>
</dbReference>
<dbReference type="PANTHER" id="PTHR31413:SF31">
    <property type="entry name" value="NINJA-FAMILY PROTEIN AFP3"/>
    <property type="match status" value="1"/>
</dbReference>
<dbReference type="Pfam" id="PF07897">
    <property type="entry name" value="EAR"/>
    <property type="match status" value="1"/>
</dbReference>
<dbReference type="Pfam" id="PF16136">
    <property type="entry name" value="NLS_NINJA_AFP"/>
    <property type="match status" value="1"/>
</dbReference>
<dbReference type="Pfam" id="PF16135">
    <property type="entry name" value="TDBD"/>
    <property type="match status" value="1"/>
</dbReference>
<reference key="1">
    <citation type="submission" date="2007-09" db="EMBL/GenBank/DDBJ databases">
        <title>Isolation and location of three homologous ABI5-binding protein genes of wheat.</title>
        <authorList>
            <person name="Ohnishi N."/>
            <person name="Noda K."/>
        </authorList>
    </citation>
    <scope>NUCLEOTIDE SEQUENCE [GENOMIC DNA]</scope>
    <source>
        <strain>cv. Chinese Spring</strain>
    </source>
</reference>
<comment type="subcellular location">
    <subcellularLocation>
        <location>Nucleus</location>
    </subcellularLocation>
</comment>
<comment type="similarity">
    <text evidence="2">Belongs to the Ninja family.</text>
</comment>
<evidence type="ECO:0000256" key="1">
    <source>
        <dbReference type="SAM" id="MobiDB-lite"/>
    </source>
</evidence>
<evidence type="ECO:0000305" key="2"/>
<feature type="chain" id="PRO_0000369634" description="Ninja-family protein 3">
    <location>
        <begin position="1"/>
        <end position="310"/>
    </location>
</feature>
<feature type="region of interest" description="Disordered" evidence="1">
    <location>
        <begin position="1"/>
        <end position="29"/>
    </location>
</feature>
<feature type="region of interest" description="Disordered" evidence="1">
    <location>
        <begin position="68"/>
        <end position="140"/>
    </location>
</feature>
<feature type="region of interest" description="Disordered" evidence="1">
    <location>
        <begin position="156"/>
        <end position="215"/>
    </location>
</feature>
<feature type="compositionally biased region" description="Basic and acidic residues" evidence="1">
    <location>
        <begin position="99"/>
        <end position="108"/>
    </location>
</feature>
<feature type="compositionally biased region" description="Polar residues" evidence="1">
    <location>
        <begin position="156"/>
        <end position="166"/>
    </location>
</feature>
<feature type="compositionally biased region" description="Polar residues" evidence="1">
    <location>
        <begin position="176"/>
        <end position="193"/>
    </location>
</feature>
<sequence>MASRDFLGRFGGEKGASSDKAGGGAGEPDEVVELSLGLSLGGCFGANSGRDAKKPRLVRSSSLAAMCSLPGTSDDIAAATPPPAPLMRTSSLPTETEEERWRRREMQSLKRLQAKRKRLERRTSMNSGKSGGSSSRDDAQEPLYPSAFQLRRSVVDQGNASSSMPEQGSGDGAEAKSTSSMEISSDNNNQNKSLPPPAPSTAGKLPNGIVKEQPPLRTLRSLTMRTTSTGDLRKSMMEDMPIVSSKVDGPNSKKIDGFLYKYRKGEEVRIVCVCHGNFLTPAEFVKHAGGGDVTNPLRHIVVNPSPSVFL</sequence>
<proteinExistence type="inferred from homology"/>
<accession>B1B5D5</accession>